<reference key="1">
    <citation type="submission" date="2006-12" db="EMBL/GenBank/DDBJ databases">
        <title>Complete sequence of Mycobacterium vanbaalenii PYR-1.</title>
        <authorList>
            <consortium name="US DOE Joint Genome Institute"/>
            <person name="Copeland A."/>
            <person name="Lucas S."/>
            <person name="Lapidus A."/>
            <person name="Barry K."/>
            <person name="Detter J.C."/>
            <person name="Glavina del Rio T."/>
            <person name="Hammon N."/>
            <person name="Israni S."/>
            <person name="Dalin E."/>
            <person name="Tice H."/>
            <person name="Pitluck S."/>
            <person name="Singan V."/>
            <person name="Schmutz J."/>
            <person name="Larimer F."/>
            <person name="Land M."/>
            <person name="Hauser L."/>
            <person name="Kyrpides N."/>
            <person name="Anderson I.J."/>
            <person name="Miller C."/>
            <person name="Richardson P."/>
        </authorList>
    </citation>
    <scope>NUCLEOTIDE SEQUENCE [LARGE SCALE GENOMIC DNA]</scope>
    <source>
        <strain>DSM 7251 / JCM 13017 / BCRC 16820 / KCTC 9966 / NRRL B-24157 / PYR-1</strain>
    </source>
</reference>
<keyword id="KW-0328">Glycosyltransferase</keyword>
<keyword id="KW-0808">Transferase</keyword>
<organism>
    <name type="scientific">Mycolicibacterium vanbaalenii (strain DSM 7251 / JCM 13017 / BCRC 16820 / KCTC 9966 / NRRL B-24157 / PYR-1)</name>
    <name type="common">Mycobacterium vanbaalenii</name>
    <dbReference type="NCBI Taxonomy" id="350058"/>
    <lineage>
        <taxon>Bacteria</taxon>
        <taxon>Bacillati</taxon>
        <taxon>Actinomycetota</taxon>
        <taxon>Actinomycetes</taxon>
        <taxon>Mycobacteriales</taxon>
        <taxon>Mycobacteriaceae</taxon>
        <taxon>Mycolicibacterium</taxon>
    </lineage>
</organism>
<protein>
    <recommendedName>
        <fullName evidence="2">Trehalose-6-phosphate synthase</fullName>
        <shortName evidence="2">TPS</shortName>
        <ecNumber evidence="2">2.4.1.15</ecNumber>
        <ecNumber evidence="2">2.4.1.347</ecNumber>
    </recommendedName>
    <alternativeName>
        <fullName evidence="2">Alpha,alpha-trehalose-phosphate synthase [UDP-forming]</fullName>
    </alternativeName>
    <alternativeName>
        <fullName evidence="1">Osmoregulatory trehalose synthesis protein A</fullName>
        <shortName evidence="1">OtsA</shortName>
    </alternativeName>
</protein>
<comment type="function">
    <text evidence="2">Probably involved in the osmoprotection via the biosynthesis of trehalose and in the production of glycogen and alpha-glucan via the TreS-Pep2 branch involved in the biosynthesis of maltose-1-phosphate (M1P). Catalyzes the transfer of glucose from UDP-glucose (UDP-Glc) to D-glucose 6-phosphate (Glc-6-P) to form trehalose-6-phosphate. Probably also able to use ADP-Glc, CDP-Glc, GDP-Glc and TDP-Glc as glucosyl donors.</text>
</comment>
<comment type="catalytic activity">
    <reaction evidence="2">
        <text>ADP-alpha-D-glucose + D-glucose 6-phosphate = alpha,alpha-trehalose 6-phosphate + ADP + H(+)</text>
        <dbReference type="Rhea" id="RHEA:53880"/>
        <dbReference type="ChEBI" id="CHEBI:15378"/>
        <dbReference type="ChEBI" id="CHEBI:57498"/>
        <dbReference type="ChEBI" id="CHEBI:58429"/>
        <dbReference type="ChEBI" id="CHEBI:61548"/>
        <dbReference type="ChEBI" id="CHEBI:456216"/>
        <dbReference type="EC" id="2.4.1.347"/>
    </reaction>
</comment>
<comment type="catalytic activity">
    <reaction evidence="2">
        <text>CDP-alpha-D-glucose + D-glucose 6-phosphate = alpha,alpha-trehalose 6-phosphate + CDP + H(+)</text>
        <dbReference type="Rhea" id="RHEA:53884"/>
        <dbReference type="ChEBI" id="CHEBI:15378"/>
        <dbReference type="ChEBI" id="CHEBI:58069"/>
        <dbReference type="ChEBI" id="CHEBI:58429"/>
        <dbReference type="ChEBI" id="CHEBI:61548"/>
        <dbReference type="ChEBI" id="CHEBI:137927"/>
    </reaction>
</comment>
<comment type="catalytic activity">
    <reaction evidence="2">
        <text>GDP-alpha-D-glucose + D-glucose 6-phosphate = alpha,alpha-trehalose 6-phosphate + GDP + H(+)</text>
        <dbReference type="Rhea" id="RHEA:14605"/>
        <dbReference type="ChEBI" id="CHEBI:15378"/>
        <dbReference type="ChEBI" id="CHEBI:58189"/>
        <dbReference type="ChEBI" id="CHEBI:58429"/>
        <dbReference type="ChEBI" id="CHEBI:61548"/>
        <dbReference type="ChEBI" id="CHEBI:62230"/>
    </reaction>
</comment>
<comment type="catalytic activity">
    <reaction evidence="2">
        <text>TDP-alpha-D-glucose + D-glucose 6-phosphate = 5-methyl-UDP + alpha,alpha-trehalose 6-phosphate + H(+)</text>
        <dbReference type="Rhea" id="RHEA:53888"/>
        <dbReference type="ChEBI" id="CHEBI:15378"/>
        <dbReference type="ChEBI" id="CHEBI:58429"/>
        <dbReference type="ChEBI" id="CHEBI:61417"/>
        <dbReference type="ChEBI" id="CHEBI:61548"/>
        <dbReference type="ChEBI" id="CHEBI:137931"/>
    </reaction>
</comment>
<comment type="catalytic activity">
    <reaction evidence="2">
        <text>D-glucose 6-phosphate + UDP-alpha-D-glucose = alpha,alpha-trehalose 6-phosphate + UDP + H(+)</text>
        <dbReference type="Rhea" id="RHEA:18889"/>
        <dbReference type="ChEBI" id="CHEBI:15378"/>
        <dbReference type="ChEBI" id="CHEBI:58223"/>
        <dbReference type="ChEBI" id="CHEBI:58429"/>
        <dbReference type="ChEBI" id="CHEBI:58885"/>
        <dbReference type="ChEBI" id="CHEBI:61548"/>
        <dbReference type="EC" id="2.4.1.15"/>
    </reaction>
</comment>
<comment type="pathway">
    <text evidence="2">Glycan biosynthesis; trehalose biosynthesis.</text>
</comment>
<comment type="subunit">
    <text evidence="2">Homotetramer.</text>
</comment>
<comment type="similarity">
    <text evidence="2">Belongs to the glycosyltransferase 20 family.</text>
</comment>
<sequence>MAPQSGPEARSGGADFVVVANRLPIDMVRRADGTTEFKRSPGGLVTALEPLLRRRHGAWIGWPGVPEDADDPNAATEPIEQDGMTLVPVRLSSEDVAEYYEGFSNATLWPLYHDVIVKPIYHREWWDRYVDVNRRFAEATAHTAAEGATVWVQDYQLQLVPKMLRMLRPDLTIGFFLHIPFPPVELFMQMPWRTEIIEGLLGADLVGFHLPGGAQNFLILARRLIGATTSRGNVGVRSRFGEVQFGFRTVKVGAFPISIDSAELDQHARSRATRQRAKEIRAELGNPRKILLGVDRLDYTKGIDVRLRAFSELLEEGRIDPEDTVLVQLATPSRERVESYVAMREDIERQVGHVNGEFGEVGHPVLHYLHRPIPREDLVAFFVAADVMLVTPLRDGMNLVAKEYVACRHDLGGALVLSEFTGAAAELRQAYLTNPHHIEGVKDAIEAALTQAPEEGRRRMRAMRRQVLAHDVDRWARSFLDALASKEPVEG</sequence>
<proteinExistence type="inferred from homology"/>
<evidence type="ECO:0000250" key="1">
    <source>
        <dbReference type="UniProtKB" id="P31677"/>
    </source>
</evidence>
<evidence type="ECO:0000250" key="2">
    <source>
        <dbReference type="UniProtKB" id="P9WN11"/>
    </source>
</evidence>
<name>OTSA_MYCVP</name>
<feature type="chain" id="PRO_0000348925" description="Trehalose-6-phosphate synthase">
    <location>
        <begin position="1"/>
        <end position="491"/>
    </location>
</feature>
<feature type="binding site" evidence="1">
    <location>
        <position position="22"/>
    </location>
    <ligand>
        <name>D-glucose 6-phosphate</name>
        <dbReference type="ChEBI" id="CHEBI:61548"/>
    </ligand>
</feature>
<feature type="binding site" evidence="1">
    <location>
        <begin position="42"/>
        <end position="43"/>
    </location>
    <ligand>
        <name>UDP-alpha-D-glucose</name>
        <dbReference type="ChEBI" id="CHEBI:58885"/>
    </ligand>
</feature>
<feature type="binding site" evidence="1">
    <location>
        <position position="100"/>
    </location>
    <ligand>
        <name>D-glucose 6-phosphate</name>
        <dbReference type="ChEBI" id="CHEBI:61548"/>
    </ligand>
</feature>
<feature type="binding site" evidence="1">
    <location>
        <position position="154"/>
    </location>
    <ligand>
        <name>D-glucose 6-phosphate</name>
        <dbReference type="ChEBI" id="CHEBI:61548"/>
    </ligand>
</feature>
<feature type="binding site" evidence="1">
    <location>
        <position position="296"/>
    </location>
    <ligand>
        <name>UDP-alpha-D-glucose</name>
        <dbReference type="ChEBI" id="CHEBI:58885"/>
    </ligand>
</feature>
<feature type="binding site" evidence="1">
    <location>
        <position position="301"/>
    </location>
    <ligand>
        <name>UDP-alpha-D-glucose</name>
        <dbReference type="ChEBI" id="CHEBI:58885"/>
    </ligand>
</feature>
<feature type="binding site" evidence="1">
    <location>
        <position position="334"/>
    </location>
    <ligand>
        <name>D-glucose 6-phosphate</name>
        <dbReference type="ChEBI" id="CHEBI:61548"/>
    </ligand>
</feature>
<feature type="binding site" evidence="1">
    <location>
        <begin position="399"/>
        <end position="403"/>
    </location>
    <ligand>
        <name>UDP-alpha-D-glucose</name>
        <dbReference type="ChEBI" id="CHEBI:58885"/>
    </ligand>
</feature>
<feature type="site" description="Involved in alpha anomer selectivity" evidence="1">
    <location>
        <position position="109"/>
    </location>
</feature>
<feature type="site" description="Involved in alpha anomer selectivity" evidence="1">
    <location>
        <position position="179"/>
    </location>
</feature>
<gene>
    <name evidence="2" type="primary">otsA</name>
    <name type="ordered locus">Mvan_5192</name>
</gene>
<dbReference type="EC" id="2.4.1.15" evidence="2"/>
<dbReference type="EC" id="2.4.1.347" evidence="2"/>
<dbReference type="EMBL" id="CP000511">
    <property type="protein sequence ID" value="ABM15963.1"/>
    <property type="molecule type" value="Genomic_DNA"/>
</dbReference>
<dbReference type="RefSeq" id="WP_011782333.1">
    <property type="nucleotide sequence ID" value="NC_008726.1"/>
</dbReference>
<dbReference type="SMR" id="A1TFL3"/>
<dbReference type="STRING" id="350058.Mvan_5192"/>
<dbReference type="CAZy" id="GT20">
    <property type="family name" value="Glycosyltransferase Family 20"/>
</dbReference>
<dbReference type="KEGG" id="mva:Mvan_5192"/>
<dbReference type="eggNOG" id="COG0380">
    <property type="taxonomic scope" value="Bacteria"/>
</dbReference>
<dbReference type="HOGENOM" id="CLU_002351_7_1_11"/>
<dbReference type="UniPathway" id="UPA00299"/>
<dbReference type="Proteomes" id="UP000009159">
    <property type="component" value="Chromosome"/>
</dbReference>
<dbReference type="GO" id="GO:0005829">
    <property type="term" value="C:cytosol"/>
    <property type="evidence" value="ECO:0007669"/>
    <property type="project" value="TreeGrafter"/>
</dbReference>
<dbReference type="GO" id="GO:0047260">
    <property type="term" value="F:alpha,alpha-trehalose-phosphate synthase (GDP-forming) activity"/>
    <property type="evidence" value="ECO:0007669"/>
    <property type="project" value="RHEA"/>
</dbReference>
<dbReference type="GO" id="GO:0003825">
    <property type="term" value="F:alpha,alpha-trehalose-phosphate synthase (UDP-forming) activity"/>
    <property type="evidence" value="ECO:0007669"/>
    <property type="project" value="UniProtKB-EC"/>
</dbReference>
<dbReference type="GO" id="GO:0004805">
    <property type="term" value="F:trehalose-phosphatase activity"/>
    <property type="evidence" value="ECO:0007669"/>
    <property type="project" value="TreeGrafter"/>
</dbReference>
<dbReference type="GO" id="GO:0005992">
    <property type="term" value="P:trehalose biosynthetic process"/>
    <property type="evidence" value="ECO:0007669"/>
    <property type="project" value="UniProtKB-UniPathway"/>
</dbReference>
<dbReference type="CDD" id="cd03788">
    <property type="entry name" value="GT20_TPS"/>
    <property type="match status" value="1"/>
</dbReference>
<dbReference type="Gene3D" id="3.40.50.2000">
    <property type="entry name" value="Glycogen Phosphorylase B"/>
    <property type="match status" value="2"/>
</dbReference>
<dbReference type="InterPro" id="IPR001830">
    <property type="entry name" value="Glyco_trans_20"/>
</dbReference>
<dbReference type="PANTHER" id="PTHR10788:SF106">
    <property type="entry name" value="BCDNA.GH08860"/>
    <property type="match status" value="1"/>
</dbReference>
<dbReference type="PANTHER" id="PTHR10788">
    <property type="entry name" value="TREHALOSE-6-PHOSPHATE SYNTHASE"/>
    <property type="match status" value="1"/>
</dbReference>
<dbReference type="Pfam" id="PF00982">
    <property type="entry name" value="Glyco_transf_20"/>
    <property type="match status" value="1"/>
</dbReference>
<dbReference type="SUPFAM" id="SSF53756">
    <property type="entry name" value="UDP-Glycosyltransferase/glycogen phosphorylase"/>
    <property type="match status" value="1"/>
</dbReference>
<accession>A1TFL3</accession>